<keyword id="KW-1003">Cell membrane</keyword>
<keyword id="KW-0333">Golgi apparatus</keyword>
<keyword id="KW-0472">Membrane</keyword>
<keyword id="KW-0597">Phosphoprotein</keyword>
<keyword id="KW-1267">Proteomics identification</keyword>
<keyword id="KW-1185">Reference proteome</keyword>
<keyword id="KW-0812">Transmembrane</keyword>
<keyword id="KW-1133">Transmembrane helix</keyword>
<gene>
    <name evidence="8" type="primary">PLLP</name>
    <name type="synonym">PMLP</name>
    <name type="synonym">TM4SF11</name>
</gene>
<protein>
    <recommendedName>
        <fullName>Plasmolipin</fullName>
    </recommendedName>
    <alternativeName>
        <fullName>Plasma membrane proteolipid</fullName>
    </alternativeName>
</protein>
<accession>Q9Y342</accession>
<accession>B2R9T6</accession>
<reference key="1">
    <citation type="submission" date="1999-03" db="EMBL/GenBank/DDBJ databases">
        <title>Molecular cloning of human plasmolipin cDNA.</title>
        <authorList>
            <person name="Xie B."/>
            <person name="Durrie R."/>
            <person name="Sapirstein V.S."/>
        </authorList>
    </citation>
    <scope>NUCLEOTIDE SEQUENCE [MRNA]</scope>
    <source>
        <tissue>Kidney</tissue>
    </source>
</reference>
<reference key="2">
    <citation type="journal article" date="2004" name="Nat. Genet.">
        <title>Complete sequencing and characterization of 21,243 full-length human cDNAs.</title>
        <authorList>
            <person name="Ota T."/>
            <person name="Suzuki Y."/>
            <person name="Nishikawa T."/>
            <person name="Otsuki T."/>
            <person name="Sugiyama T."/>
            <person name="Irie R."/>
            <person name="Wakamatsu A."/>
            <person name="Hayashi K."/>
            <person name="Sato H."/>
            <person name="Nagai K."/>
            <person name="Kimura K."/>
            <person name="Makita H."/>
            <person name="Sekine M."/>
            <person name="Obayashi M."/>
            <person name="Nishi T."/>
            <person name="Shibahara T."/>
            <person name="Tanaka T."/>
            <person name="Ishii S."/>
            <person name="Yamamoto J."/>
            <person name="Saito K."/>
            <person name="Kawai Y."/>
            <person name="Isono Y."/>
            <person name="Nakamura Y."/>
            <person name="Nagahari K."/>
            <person name="Murakami K."/>
            <person name="Yasuda T."/>
            <person name="Iwayanagi T."/>
            <person name="Wagatsuma M."/>
            <person name="Shiratori A."/>
            <person name="Sudo H."/>
            <person name="Hosoiri T."/>
            <person name="Kaku Y."/>
            <person name="Kodaira H."/>
            <person name="Kondo H."/>
            <person name="Sugawara M."/>
            <person name="Takahashi M."/>
            <person name="Kanda K."/>
            <person name="Yokoi T."/>
            <person name="Furuya T."/>
            <person name="Kikkawa E."/>
            <person name="Omura Y."/>
            <person name="Abe K."/>
            <person name="Kamihara K."/>
            <person name="Katsuta N."/>
            <person name="Sato K."/>
            <person name="Tanikawa M."/>
            <person name="Yamazaki M."/>
            <person name="Ninomiya K."/>
            <person name="Ishibashi T."/>
            <person name="Yamashita H."/>
            <person name="Murakawa K."/>
            <person name="Fujimori K."/>
            <person name="Tanai H."/>
            <person name="Kimata M."/>
            <person name="Watanabe M."/>
            <person name="Hiraoka S."/>
            <person name="Chiba Y."/>
            <person name="Ishida S."/>
            <person name="Ono Y."/>
            <person name="Takiguchi S."/>
            <person name="Watanabe S."/>
            <person name="Yosida M."/>
            <person name="Hotuta T."/>
            <person name="Kusano J."/>
            <person name="Kanehori K."/>
            <person name="Takahashi-Fujii A."/>
            <person name="Hara H."/>
            <person name="Tanase T.-O."/>
            <person name="Nomura Y."/>
            <person name="Togiya S."/>
            <person name="Komai F."/>
            <person name="Hara R."/>
            <person name="Takeuchi K."/>
            <person name="Arita M."/>
            <person name="Imose N."/>
            <person name="Musashino K."/>
            <person name="Yuuki H."/>
            <person name="Oshima A."/>
            <person name="Sasaki N."/>
            <person name="Aotsuka S."/>
            <person name="Yoshikawa Y."/>
            <person name="Matsunawa H."/>
            <person name="Ichihara T."/>
            <person name="Shiohata N."/>
            <person name="Sano S."/>
            <person name="Moriya S."/>
            <person name="Momiyama H."/>
            <person name="Satoh N."/>
            <person name="Takami S."/>
            <person name="Terashima Y."/>
            <person name="Suzuki O."/>
            <person name="Nakagawa S."/>
            <person name="Senoh A."/>
            <person name="Mizoguchi H."/>
            <person name="Goto Y."/>
            <person name="Shimizu F."/>
            <person name="Wakebe H."/>
            <person name="Hishigaki H."/>
            <person name="Watanabe T."/>
            <person name="Sugiyama A."/>
            <person name="Takemoto M."/>
            <person name="Kawakami B."/>
            <person name="Yamazaki M."/>
            <person name="Watanabe K."/>
            <person name="Kumagai A."/>
            <person name="Itakura S."/>
            <person name="Fukuzumi Y."/>
            <person name="Fujimori Y."/>
            <person name="Komiyama M."/>
            <person name="Tashiro H."/>
            <person name="Tanigami A."/>
            <person name="Fujiwara T."/>
            <person name="Ono T."/>
            <person name="Yamada K."/>
            <person name="Fujii Y."/>
            <person name="Ozaki K."/>
            <person name="Hirao M."/>
            <person name="Ohmori Y."/>
            <person name="Kawabata A."/>
            <person name="Hikiji T."/>
            <person name="Kobatake N."/>
            <person name="Inagaki H."/>
            <person name="Ikema Y."/>
            <person name="Okamoto S."/>
            <person name="Okitani R."/>
            <person name="Kawakami T."/>
            <person name="Noguchi S."/>
            <person name="Itoh T."/>
            <person name="Shigeta K."/>
            <person name="Senba T."/>
            <person name="Matsumura K."/>
            <person name="Nakajima Y."/>
            <person name="Mizuno T."/>
            <person name="Morinaga M."/>
            <person name="Sasaki M."/>
            <person name="Togashi T."/>
            <person name="Oyama M."/>
            <person name="Hata H."/>
            <person name="Watanabe M."/>
            <person name="Komatsu T."/>
            <person name="Mizushima-Sugano J."/>
            <person name="Satoh T."/>
            <person name="Shirai Y."/>
            <person name="Takahashi Y."/>
            <person name="Nakagawa K."/>
            <person name="Okumura K."/>
            <person name="Nagase T."/>
            <person name="Nomura N."/>
            <person name="Kikuchi H."/>
            <person name="Masuho Y."/>
            <person name="Yamashita R."/>
            <person name="Nakai K."/>
            <person name="Yada T."/>
            <person name="Nakamura Y."/>
            <person name="Ohara O."/>
            <person name="Isogai T."/>
            <person name="Sugano S."/>
        </authorList>
    </citation>
    <scope>NUCLEOTIDE SEQUENCE [LARGE SCALE MRNA]</scope>
    <source>
        <tissue>Subthalamic nucleus</tissue>
    </source>
</reference>
<reference key="3">
    <citation type="submission" date="2005-07" db="EMBL/GenBank/DDBJ databases">
        <authorList>
            <person name="Mural R.J."/>
            <person name="Istrail S."/>
            <person name="Sutton G.G."/>
            <person name="Florea L."/>
            <person name="Halpern A.L."/>
            <person name="Mobarry C.M."/>
            <person name="Lippert R."/>
            <person name="Walenz B."/>
            <person name="Shatkay H."/>
            <person name="Dew I."/>
            <person name="Miller J.R."/>
            <person name="Flanigan M.J."/>
            <person name="Edwards N.J."/>
            <person name="Bolanos R."/>
            <person name="Fasulo D."/>
            <person name="Halldorsson B.V."/>
            <person name="Hannenhalli S."/>
            <person name="Turner R."/>
            <person name="Yooseph S."/>
            <person name="Lu F."/>
            <person name="Nusskern D.R."/>
            <person name="Shue B.C."/>
            <person name="Zheng X.H."/>
            <person name="Zhong F."/>
            <person name="Delcher A.L."/>
            <person name="Huson D.H."/>
            <person name="Kravitz S.A."/>
            <person name="Mouchard L."/>
            <person name="Reinert K."/>
            <person name="Remington K.A."/>
            <person name="Clark A.G."/>
            <person name="Waterman M.S."/>
            <person name="Eichler E.E."/>
            <person name="Adams M.D."/>
            <person name="Hunkapiller M.W."/>
            <person name="Myers E.W."/>
            <person name="Venter J.C."/>
        </authorList>
    </citation>
    <scope>NUCLEOTIDE SEQUENCE [LARGE SCALE GENOMIC DNA]</scope>
</reference>
<reference key="4">
    <citation type="journal article" date="2004" name="Genome Res.">
        <title>The status, quality, and expansion of the NIH full-length cDNA project: the Mammalian Gene Collection (MGC).</title>
        <authorList>
            <consortium name="The MGC Project Team"/>
        </authorList>
    </citation>
    <scope>NUCLEOTIDE SEQUENCE [LARGE SCALE MRNA]</scope>
    <source>
        <tissue>Ovary</tissue>
    </source>
</reference>
<reference key="5">
    <citation type="journal article" date="2008" name="Mol. Cell">
        <title>Kinase-selective enrichment enables quantitative phosphoproteomics of the kinome across the cell cycle.</title>
        <authorList>
            <person name="Daub H."/>
            <person name="Olsen J.V."/>
            <person name="Bairlein M."/>
            <person name="Gnad F."/>
            <person name="Oppermann F.S."/>
            <person name="Korner R."/>
            <person name="Greff Z."/>
            <person name="Keri G."/>
            <person name="Stemmann O."/>
            <person name="Mann M."/>
        </authorList>
    </citation>
    <scope>IDENTIFICATION BY MASS SPECTROMETRY [LARGE SCALE ANALYSIS]</scope>
    <source>
        <tissue>Cervix carcinoma</tissue>
    </source>
</reference>
<reference key="6">
    <citation type="journal article" date="2011" name="BMC Syst. Biol.">
        <title>Initial characterization of the human central proteome.</title>
        <authorList>
            <person name="Burkard T.R."/>
            <person name="Planyavsky M."/>
            <person name="Kaupe I."/>
            <person name="Breitwieser F.P."/>
            <person name="Buerckstuemmer T."/>
            <person name="Bennett K.L."/>
            <person name="Superti-Furga G."/>
            <person name="Colinge J."/>
        </authorList>
    </citation>
    <scope>IDENTIFICATION BY MASS SPECTROMETRY [LARGE SCALE ANALYSIS]</scope>
</reference>
<reference key="7">
    <citation type="journal article" date="2013" name="J. Proteome Res.">
        <title>Toward a comprehensive characterization of a human cancer cell phosphoproteome.</title>
        <authorList>
            <person name="Zhou H."/>
            <person name="Di Palma S."/>
            <person name="Preisinger C."/>
            <person name="Peng M."/>
            <person name="Polat A.N."/>
            <person name="Heck A.J."/>
            <person name="Mohammed S."/>
        </authorList>
    </citation>
    <scope>PHOSPHORYLATION [LARGE SCALE ANALYSIS] AT SER-9</scope>
    <scope>IDENTIFICATION BY MASS SPECTROMETRY [LARGE SCALE ANALYSIS]</scope>
    <source>
        <tissue>Cervix carcinoma</tissue>
    </source>
</reference>
<reference key="8">
    <citation type="journal article" date="2015" name="J. Cell Sci.">
        <title>The myelin proteolipid plasmolipin forms oligomers and induces liquid-ordered membranes in the Golgi complex.</title>
        <authorList>
            <person name="Yaffe Y."/>
            <person name="Hugger I."/>
            <person name="Yassaf I.N."/>
            <person name="Shepshelovitch J."/>
            <person name="Sklan E.H."/>
            <person name="Elkabetz Y."/>
            <person name="Yeheskel A."/>
            <person name="Pasmanik-Chor M."/>
            <person name="Benzing C."/>
            <person name="Macmillan A."/>
            <person name="Gaus K."/>
            <person name="Eshed-Eisenbach Y."/>
            <person name="Peles E."/>
            <person name="Hirschberg K."/>
        </authorList>
    </citation>
    <scope>FUNCTION</scope>
    <scope>SUBCELLULAR LOCATION</scope>
    <scope>SUBUNIT</scope>
</reference>
<reference key="9">
    <citation type="journal article" date="2022" name="Cell. Mol. Life Sci.">
        <title>Plasmolipin regulates basolateral-to-apical transcytosis of ICAM-1 and leukocyte adhesion in polarized hepatic epithelial cells.</title>
        <authorList>
            <person name="Cacho-Navas C."/>
            <person name="Reglero-Real N."/>
            <person name="Colas-Algora N."/>
            <person name="Barroso S."/>
            <person name="de Rivas G."/>
            <person name="Stamatakis K."/>
            <person name="Feito J."/>
            <person name="Andres G."/>
            <person name="Fresno M."/>
            <person name="Kremer L."/>
            <person name="Correas I."/>
            <person name="Alonso M.A."/>
            <person name="Millan J."/>
        </authorList>
    </citation>
    <scope>FUNCTION</scope>
</reference>
<organism>
    <name type="scientific">Homo sapiens</name>
    <name type="common">Human</name>
    <dbReference type="NCBI Taxonomy" id="9606"/>
    <lineage>
        <taxon>Eukaryota</taxon>
        <taxon>Metazoa</taxon>
        <taxon>Chordata</taxon>
        <taxon>Craniata</taxon>
        <taxon>Vertebrata</taxon>
        <taxon>Euteleostomi</taxon>
        <taxon>Mammalia</taxon>
        <taxon>Eutheria</taxon>
        <taxon>Euarchontoglires</taxon>
        <taxon>Primates</taxon>
        <taxon>Haplorrhini</taxon>
        <taxon>Catarrhini</taxon>
        <taxon>Hominidae</taxon>
        <taxon>Homo</taxon>
    </lineage>
</organism>
<proteinExistence type="evidence at protein level"/>
<name>PLLP_HUMAN</name>
<dbReference type="EMBL" id="AF137386">
    <property type="protein sequence ID" value="AAD33060.1"/>
    <property type="molecule type" value="mRNA"/>
</dbReference>
<dbReference type="EMBL" id="AK313910">
    <property type="protein sequence ID" value="BAG36633.1"/>
    <property type="molecule type" value="mRNA"/>
</dbReference>
<dbReference type="EMBL" id="CH471092">
    <property type="protein sequence ID" value="EAW82915.1"/>
    <property type="molecule type" value="Genomic_DNA"/>
</dbReference>
<dbReference type="EMBL" id="BC002760">
    <property type="protein sequence ID" value="AAH02760.1"/>
    <property type="molecule type" value="mRNA"/>
</dbReference>
<dbReference type="CCDS" id="CCDS10777.1"/>
<dbReference type="RefSeq" id="NP_057077.1">
    <property type="nucleotide sequence ID" value="NM_015993.3"/>
</dbReference>
<dbReference type="SMR" id="Q9Y342"/>
<dbReference type="BioGRID" id="119279">
    <property type="interactions" value="63"/>
</dbReference>
<dbReference type="FunCoup" id="Q9Y342">
    <property type="interactions" value="68"/>
</dbReference>
<dbReference type="IntAct" id="Q9Y342">
    <property type="interactions" value="52"/>
</dbReference>
<dbReference type="MINT" id="Q9Y342"/>
<dbReference type="STRING" id="9606.ENSP00000219207"/>
<dbReference type="iPTMnet" id="Q9Y342"/>
<dbReference type="PhosphoSitePlus" id="Q9Y342"/>
<dbReference type="BioMuta" id="PLLP"/>
<dbReference type="DMDM" id="12229882"/>
<dbReference type="jPOST" id="Q9Y342"/>
<dbReference type="MassIVE" id="Q9Y342"/>
<dbReference type="PaxDb" id="9606-ENSP00000219207"/>
<dbReference type="PeptideAtlas" id="Q9Y342"/>
<dbReference type="ProteomicsDB" id="85972"/>
<dbReference type="Antibodypedia" id="44063">
    <property type="antibodies" value="105 antibodies from 22 providers"/>
</dbReference>
<dbReference type="DNASU" id="51090"/>
<dbReference type="Ensembl" id="ENST00000219207.10">
    <property type="protein sequence ID" value="ENSP00000219207.5"/>
    <property type="gene ID" value="ENSG00000102934.10"/>
</dbReference>
<dbReference type="GeneID" id="51090"/>
<dbReference type="KEGG" id="hsa:51090"/>
<dbReference type="MANE-Select" id="ENST00000219207.10">
    <property type="protein sequence ID" value="ENSP00000219207.5"/>
    <property type="RefSeq nucleotide sequence ID" value="NM_015993.3"/>
    <property type="RefSeq protein sequence ID" value="NP_057077.1"/>
</dbReference>
<dbReference type="UCSC" id="uc002elg.3">
    <property type="organism name" value="human"/>
</dbReference>
<dbReference type="AGR" id="HGNC:18553"/>
<dbReference type="CTD" id="51090"/>
<dbReference type="DisGeNET" id="51090"/>
<dbReference type="GeneCards" id="PLLP"/>
<dbReference type="HGNC" id="HGNC:18553">
    <property type="gene designation" value="PLLP"/>
</dbReference>
<dbReference type="HPA" id="ENSG00000102934">
    <property type="expression patterns" value="Tissue enhanced (brain)"/>
</dbReference>
<dbReference type="MIM" id="600340">
    <property type="type" value="gene"/>
</dbReference>
<dbReference type="neXtProt" id="NX_Q9Y342"/>
<dbReference type="OpenTargets" id="ENSG00000102934"/>
<dbReference type="PharmGKB" id="PA38572"/>
<dbReference type="VEuPathDB" id="HostDB:ENSG00000102934"/>
<dbReference type="eggNOG" id="KOG4788">
    <property type="taxonomic scope" value="Eukaryota"/>
</dbReference>
<dbReference type="GeneTree" id="ENSGT00940000156011"/>
<dbReference type="HOGENOM" id="CLU_103581_2_0_1"/>
<dbReference type="InParanoid" id="Q9Y342"/>
<dbReference type="OMA" id="MYATAFI"/>
<dbReference type="OrthoDB" id="6258237at2759"/>
<dbReference type="PAN-GO" id="Q9Y342">
    <property type="GO annotations" value="3 GO annotations based on evolutionary models"/>
</dbReference>
<dbReference type="PhylomeDB" id="Q9Y342"/>
<dbReference type="TreeFam" id="TF316174"/>
<dbReference type="PathwayCommons" id="Q9Y342"/>
<dbReference type="SignaLink" id="Q9Y342"/>
<dbReference type="BioGRID-ORCS" id="51090">
    <property type="hits" value="14 hits in 1150 CRISPR screens"/>
</dbReference>
<dbReference type="CD-CODE" id="FB4E32DD">
    <property type="entry name" value="Presynaptic clusters and postsynaptic densities"/>
</dbReference>
<dbReference type="ChiTaRS" id="PLLP">
    <property type="organism name" value="human"/>
</dbReference>
<dbReference type="GenomeRNAi" id="51090"/>
<dbReference type="Pharos" id="Q9Y342">
    <property type="development level" value="Tbio"/>
</dbReference>
<dbReference type="PRO" id="PR:Q9Y342"/>
<dbReference type="Proteomes" id="UP000005640">
    <property type="component" value="Chromosome 16"/>
</dbReference>
<dbReference type="RNAct" id="Q9Y342">
    <property type="molecule type" value="protein"/>
</dbReference>
<dbReference type="Bgee" id="ENSG00000102934">
    <property type="expression patterns" value="Expressed in inferior vagus X ganglion and 185 other cell types or tissues"/>
</dbReference>
<dbReference type="ExpressionAtlas" id="Q9Y342">
    <property type="expression patterns" value="baseline and differential"/>
</dbReference>
<dbReference type="GO" id="GO:0016324">
    <property type="term" value="C:apical plasma membrane"/>
    <property type="evidence" value="ECO:0007669"/>
    <property type="project" value="UniProtKB-SubCell"/>
</dbReference>
<dbReference type="GO" id="GO:0043218">
    <property type="term" value="C:compact myelin"/>
    <property type="evidence" value="ECO:0007669"/>
    <property type="project" value="Ensembl"/>
</dbReference>
<dbReference type="GO" id="GO:0005794">
    <property type="term" value="C:Golgi apparatus"/>
    <property type="evidence" value="ECO:0007669"/>
    <property type="project" value="UniProtKB-SubCell"/>
</dbReference>
<dbReference type="GO" id="GO:0016020">
    <property type="term" value="C:membrane"/>
    <property type="evidence" value="ECO:0000318"/>
    <property type="project" value="GO_Central"/>
</dbReference>
<dbReference type="GO" id="GO:0045121">
    <property type="term" value="C:membrane raft"/>
    <property type="evidence" value="ECO:0007669"/>
    <property type="project" value="Ensembl"/>
</dbReference>
<dbReference type="GO" id="GO:0043209">
    <property type="term" value="C:myelin sheath"/>
    <property type="evidence" value="ECO:0000314"/>
    <property type="project" value="UniProtKB"/>
</dbReference>
<dbReference type="GO" id="GO:0005886">
    <property type="term" value="C:plasma membrane"/>
    <property type="evidence" value="ECO:0000314"/>
    <property type="project" value="UniProtKB"/>
</dbReference>
<dbReference type="GO" id="GO:0042802">
    <property type="term" value="F:identical protein binding"/>
    <property type="evidence" value="ECO:0000314"/>
    <property type="project" value="UniProtKB"/>
</dbReference>
<dbReference type="GO" id="GO:0019911">
    <property type="term" value="F:structural constituent of myelin sheath"/>
    <property type="evidence" value="ECO:0000318"/>
    <property type="project" value="GO_Central"/>
</dbReference>
<dbReference type="GO" id="GO:0006811">
    <property type="term" value="P:monoatomic ion transport"/>
    <property type="evidence" value="ECO:0007669"/>
    <property type="project" value="Ensembl"/>
</dbReference>
<dbReference type="GO" id="GO:0032288">
    <property type="term" value="P:myelin assembly"/>
    <property type="evidence" value="ECO:0000314"/>
    <property type="project" value="UniProtKB"/>
</dbReference>
<dbReference type="GO" id="GO:0042552">
    <property type="term" value="P:myelination"/>
    <property type="evidence" value="ECO:0000318"/>
    <property type="project" value="GO_Central"/>
</dbReference>
<dbReference type="GO" id="GO:0030100">
    <property type="term" value="P:regulation of endocytosis"/>
    <property type="evidence" value="ECO:0000250"/>
    <property type="project" value="UniProtKB"/>
</dbReference>
<dbReference type="GO" id="GO:1904298">
    <property type="term" value="P:regulation of transcytosis"/>
    <property type="evidence" value="ECO:0000314"/>
    <property type="project" value="UniProtKB"/>
</dbReference>
<dbReference type="InterPro" id="IPR013295">
    <property type="entry name" value="MAL"/>
</dbReference>
<dbReference type="InterPro" id="IPR008253">
    <property type="entry name" value="Marvel"/>
</dbReference>
<dbReference type="InterPro" id="IPR050578">
    <property type="entry name" value="MARVEL-CKLF_proteins"/>
</dbReference>
<dbReference type="PANTHER" id="PTHR22776">
    <property type="entry name" value="MARVEL-CONTAINING POTENTIAL LIPID RAFT-ASSOCIATED PROTEIN"/>
    <property type="match status" value="1"/>
</dbReference>
<dbReference type="PANTHER" id="PTHR22776:SF9">
    <property type="entry name" value="PLASMOLIPIN"/>
    <property type="match status" value="1"/>
</dbReference>
<dbReference type="Pfam" id="PF01284">
    <property type="entry name" value="MARVEL"/>
    <property type="match status" value="1"/>
</dbReference>
<dbReference type="PRINTS" id="PR01884">
    <property type="entry name" value="MALPROTEIN"/>
</dbReference>
<dbReference type="PROSITE" id="PS51225">
    <property type="entry name" value="MARVEL"/>
    <property type="match status" value="1"/>
</dbReference>
<evidence type="ECO:0000250" key="1">
    <source>
        <dbReference type="UniProtKB" id="A3KQ86"/>
    </source>
</evidence>
<evidence type="ECO:0000250" key="2">
    <source>
        <dbReference type="UniProtKB" id="P47987"/>
    </source>
</evidence>
<evidence type="ECO:0000255" key="3"/>
<evidence type="ECO:0000255" key="4">
    <source>
        <dbReference type="PROSITE-ProRule" id="PRU00581"/>
    </source>
</evidence>
<evidence type="ECO:0000269" key="5">
    <source>
    </source>
</evidence>
<evidence type="ECO:0000269" key="6">
    <source>
    </source>
</evidence>
<evidence type="ECO:0000305" key="7"/>
<evidence type="ECO:0000312" key="8">
    <source>
        <dbReference type="HGNC" id="HGNC:18553"/>
    </source>
</evidence>
<evidence type="ECO:0007744" key="9">
    <source>
    </source>
</evidence>
<comment type="function">
    <text evidence="1 5 6">Main component of the myelin sheath that plays an important role in myelin membrane biogenesis and myelination (PubMed:26002055). Plays an essential function in apical endocytosis. Regulates epithelial development through the regulation of apical endocytosis (By similarity). Part of the intracellular machinery that mediates basolateral-to-apical transport of ICAM-1, an essential adhesion receptor in epithelial cells, from the subapical compartment in hepatic epithelial cells (PubMed:34999972).</text>
</comment>
<comment type="subunit">
    <text evidence="5">Forms oligomers.</text>
</comment>
<comment type="interaction">
    <interactant intactId="EBI-3919291">
        <id>Q9Y342</id>
    </interactant>
    <interactant intactId="EBI-13059134">
        <id>Q13520</id>
        <label>AQP6</label>
    </interactant>
    <organismsDiffer>false</organismsDiffer>
    <experiments>3</experiments>
</comment>
<comment type="interaction">
    <interactant intactId="EBI-3919291">
        <id>Q9Y342</id>
    </interactant>
    <interactant intactId="EBI-747430">
        <id>Q9BXK5</id>
        <label>BCL2L13</label>
    </interactant>
    <organismsDiffer>false</organismsDiffer>
    <experiments>3</experiments>
</comment>
<comment type="interaction">
    <interactant intactId="EBI-3919291">
        <id>Q9Y342</id>
    </interactant>
    <interactant intactId="EBI-13362802">
        <id>Q6UWJ8-2</id>
        <label>CD164L2</label>
    </interactant>
    <organismsDiffer>false</organismsDiffer>
    <experiments>3</experiments>
</comment>
<comment type="interaction">
    <interactant intactId="EBI-3919291">
        <id>Q9Y342</id>
    </interactant>
    <interactant intactId="EBI-11742599">
        <id>O95500</id>
        <label>CLDN14</label>
    </interactant>
    <organismsDiffer>false</organismsDiffer>
    <experiments>3</experiments>
</comment>
<comment type="interaction">
    <interactant intactId="EBI-3919291">
        <id>Q9Y342</id>
    </interactant>
    <interactant intactId="EBI-12811991">
        <id>Q2HXU8-2</id>
        <label>CLEC12B</label>
    </interactant>
    <organismsDiffer>false</organismsDiffer>
    <experiments>3</experiments>
</comment>
<comment type="interaction">
    <interactant intactId="EBI-3919291">
        <id>Q9Y342</id>
    </interactant>
    <interactant intactId="EBI-11749983">
        <id>Q9UHP7-3</id>
        <label>CLEC2D</label>
    </interactant>
    <organismsDiffer>false</organismsDiffer>
    <experiments>3</experiments>
</comment>
<comment type="interaction">
    <interactant intactId="EBI-3919291">
        <id>Q9Y342</id>
    </interactant>
    <interactant intactId="EBI-17233035">
        <id>Q9BUF7-2</id>
        <label>CRB3</label>
    </interactant>
    <organismsDiffer>false</organismsDiffer>
    <experiments>3</experiments>
</comment>
<comment type="interaction">
    <interactant intactId="EBI-3919291">
        <id>Q9Y342</id>
    </interactant>
    <interactant intactId="EBI-3867333">
        <id>A8MQ03</id>
        <label>CYSRT1</label>
    </interactant>
    <organismsDiffer>false</organismsDiffer>
    <experiments>4</experiments>
</comment>
<comment type="interaction">
    <interactant intactId="EBI-3919291">
        <id>Q9Y342</id>
    </interactant>
    <interactant intactId="EBI-3915253">
        <id>Q15125</id>
        <label>EBP</label>
    </interactant>
    <organismsDiffer>false</organismsDiffer>
    <experiments>3</experiments>
</comment>
<comment type="interaction">
    <interactant intactId="EBI-3919291">
        <id>Q9Y342</id>
    </interactant>
    <interactant intactId="EBI-18535450">
        <id>Q9GZR5</id>
        <label>ELOVL4</label>
    </interactant>
    <organismsDiffer>false</organismsDiffer>
    <experiments>3</experiments>
</comment>
<comment type="interaction">
    <interactant intactId="EBI-3919291">
        <id>Q9Y342</id>
    </interactant>
    <interactant intactId="EBI-781551">
        <id>Q9Y282</id>
        <label>ERGIC3</label>
    </interactant>
    <organismsDiffer>false</organismsDiffer>
    <experiments>3</experiments>
</comment>
<comment type="interaction">
    <interactant intactId="EBI-3919291">
        <id>Q9Y342</id>
    </interactant>
    <interactant intactId="EBI-18636064">
        <id>Q8TBP5</id>
        <label>FAM174A</label>
    </interactant>
    <organismsDiffer>false</organismsDiffer>
    <experiments>3</experiments>
</comment>
<comment type="interaction">
    <interactant intactId="EBI-3919291">
        <id>Q9Y342</id>
    </interactant>
    <interactant intactId="EBI-12142257">
        <id>Q8TBE3</id>
        <label>FNDC9</label>
    </interactant>
    <organismsDiffer>false</organismsDiffer>
    <experiments>3</experiments>
</comment>
<comment type="interaction">
    <interactant intactId="EBI-3919291">
        <id>Q9Y342</id>
    </interactant>
    <interactant intactId="EBI-725515">
        <id>O43559</id>
        <label>FRS3</label>
    </interactant>
    <organismsDiffer>false</organismsDiffer>
    <experiments>3</experiments>
</comment>
<comment type="interaction">
    <interactant intactId="EBI-3919291">
        <id>Q9Y342</id>
    </interactant>
    <interactant intactId="EBI-17231387">
        <id>Q6ZVE7</id>
        <label>GOLT1A</label>
    </interactant>
    <organismsDiffer>false</organismsDiffer>
    <experiments>3</experiments>
</comment>
<comment type="interaction">
    <interactant intactId="EBI-3919291">
        <id>Q9Y342</id>
    </interactant>
    <interactant intactId="EBI-11721746">
        <id>Q8TED1</id>
        <label>GPX8</label>
    </interactant>
    <organismsDiffer>false</organismsDiffer>
    <experiments>3</experiments>
</comment>
<comment type="interaction">
    <interactant intactId="EBI-3919291">
        <id>Q9Y342</id>
    </interactant>
    <interactant intactId="EBI-747754">
        <id>P28799</id>
        <label>GRN</label>
    </interactant>
    <organismsDiffer>false</organismsDiffer>
    <experiments>3</experiments>
</comment>
<comment type="interaction">
    <interactant intactId="EBI-3919291">
        <id>Q9Y342</id>
    </interactant>
    <interactant intactId="EBI-740785">
        <id>P49639</id>
        <label>HOXA1</label>
    </interactant>
    <organismsDiffer>false</organismsDiffer>
    <experiments>3</experiments>
</comment>
<comment type="interaction">
    <interactant intactId="EBI-3919291">
        <id>Q9Y342</id>
    </interactant>
    <interactant intactId="EBI-12017638">
        <id>P48051</id>
        <label>KCNJ6</label>
    </interactant>
    <organismsDiffer>false</organismsDiffer>
    <experiments>3</experiments>
</comment>
<comment type="interaction">
    <interactant intactId="EBI-3919291">
        <id>Q9Y342</id>
    </interactant>
    <interactant intactId="EBI-1047093">
        <id>O76011</id>
        <label>KRT34</label>
    </interactant>
    <organismsDiffer>false</organismsDiffer>
    <experiments>3</experiments>
</comment>
<comment type="interaction">
    <interactant intactId="EBI-3919291">
        <id>Q9Y342</id>
    </interactant>
    <interactant intactId="EBI-1044640">
        <id>Q9BYQ4</id>
        <label>KRTAP9-2</label>
    </interactant>
    <organismsDiffer>false</organismsDiffer>
    <experiments>3</experiments>
</comment>
<comment type="interaction">
    <interactant intactId="EBI-3919291">
        <id>Q9Y342</id>
    </interactant>
    <interactant intactId="EBI-2820517">
        <id>Q8TAF8</id>
        <label>LHFPL5</label>
    </interactant>
    <organismsDiffer>false</organismsDiffer>
    <experiments>3</experiments>
</comment>
<comment type="interaction">
    <interactant intactId="EBI-3919291">
        <id>Q9Y342</id>
    </interactant>
    <interactant intactId="EBI-11956541">
        <id>Q9GZY8-5</id>
        <label>MFF</label>
    </interactant>
    <organismsDiffer>false</organismsDiffer>
    <experiments>3</experiments>
</comment>
<comment type="interaction">
    <interactant intactId="EBI-3919291">
        <id>Q9Y342</id>
    </interactant>
    <interactant intactId="EBI-10227644">
        <id>Q9NXJ0</id>
        <label>MS4A12</label>
    </interactant>
    <organismsDiffer>false</organismsDiffer>
    <experiments>6</experiments>
</comment>
<comment type="interaction">
    <interactant intactId="EBI-3919291">
        <id>Q9Y342</id>
    </interactant>
    <interactant intactId="EBI-4319734">
        <id>Q9H813</id>
        <label>PACC1</label>
    </interactant>
    <organismsDiffer>false</organismsDiffer>
    <experiments>3</experiments>
</comment>
<comment type="interaction">
    <interactant intactId="EBI-3919291">
        <id>Q9Y342</id>
    </interactant>
    <interactant intactId="EBI-1050125">
        <id>O15173</id>
        <label>PGRMC2</label>
    </interactant>
    <organismsDiffer>false</organismsDiffer>
    <experiments>3</experiments>
</comment>
<comment type="interaction">
    <interactant intactId="EBI-3919291">
        <id>Q9Y342</id>
    </interactant>
    <interactant intactId="EBI-2129998">
        <id>Q9H9V4</id>
        <label>RNF122</label>
    </interactant>
    <organismsDiffer>false</organismsDiffer>
    <experiments>3</experiments>
</comment>
<comment type="interaction">
    <interactant intactId="EBI-3919291">
        <id>Q9Y342</id>
    </interactant>
    <interactant intactId="EBI-3920694">
        <id>Q9NR31</id>
        <label>SAR1A</label>
    </interactant>
    <organismsDiffer>false</organismsDiffer>
    <experiments>3</experiments>
</comment>
<comment type="interaction">
    <interactant intactId="EBI-3919291">
        <id>Q9Y342</id>
    </interactant>
    <interactant intactId="EBI-18159983">
        <id>Q3KNW5</id>
        <label>SLC10A6</label>
    </interactant>
    <organismsDiffer>false</organismsDiffer>
    <experiments>3</experiments>
</comment>
<comment type="interaction">
    <interactant intactId="EBI-3919291">
        <id>Q9Y342</id>
    </interactant>
    <interactant intactId="EBI-2800345">
        <id>Q86WV6</id>
        <label>STING1</label>
    </interactant>
    <organismsDiffer>false</organismsDiffer>
    <experiments>3</experiments>
</comment>
<comment type="interaction">
    <interactant intactId="EBI-3919291">
        <id>Q9Y342</id>
    </interactant>
    <interactant intactId="EBI-18196631">
        <id>Q5VXT5-2</id>
        <label>SYPL2</label>
    </interactant>
    <organismsDiffer>false</organismsDiffer>
    <experiments>3</experiments>
</comment>
<comment type="interaction">
    <interactant intactId="EBI-3919291">
        <id>Q9Y342</id>
    </interactant>
    <interactant intactId="EBI-4314807">
        <id>Q495A1</id>
        <label>TIGIT</label>
    </interactant>
    <organismsDiffer>false</organismsDiffer>
    <experiments>3</experiments>
</comment>
<comment type="interaction">
    <interactant intactId="EBI-3919291">
        <id>Q9Y342</id>
    </interactant>
    <interactant intactId="EBI-8638294">
        <id>Q9NUH8</id>
        <label>TMEM14B</label>
    </interactant>
    <organismsDiffer>false</organismsDiffer>
    <experiments>3</experiments>
</comment>
<comment type="interaction">
    <interactant intactId="EBI-3919291">
        <id>Q9Y342</id>
    </interactant>
    <interactant intactId="EBI-17684533">
        <id>Q9NRX6</id>
        <label>TMEM167B</label>
    </interactant>
    <organismsDiffer>false</organismsDiffer>
    <experiments>3</experiments>
</comment>
<comment type="interaction">
    <interactant intactId="EBI-3919291">
        <id>Q9Y342</id>
    </interactant>
    <interactant intactId="EBI-10276729">
        <id>Q8WUU8</id>
        <label>TMEM174</label>
    </interactant>
    <organismsDiffer>false</organismsDiffer>
    <experiments>3</experiments>
</comment>
<comment type="interaction">
    <interactant intactId="EBI-3919291">
        <id>Q9Y342</id>
    </interactant>
    <interactant intactId="EBI-11724433">
        <id>Q6ZT21</id>
        <label>TMPPE</label>
    </interactant>
    <organismsDiffer>false</organismsDiffer>
    <experiments>3</experiments>
</comment>
<comment type="interaction">
    <interactant intactId="EBI-3919291">
        <id>Q9Y342</id>
    </interactant>
    <interactant intactId="EBI-12345267">
        <id>O15393-2</id>
        <label>TMPRSS2</label>
    </interactant>
    <organismsDiffer>false</organismsDiffer>
    <experiments>3</experiments>
</comment>
<comment type="interaction">
    <interactant intactId="EBI-3919291">
        <id>Q9Y342</id>
    </interactant>
    <interactant intactId="EBI-524131">
        <id>O43557</id>
        <label>TNFSF14</label>
    </interactant>
    <organismsDiffer>false</organismsDiffer>
    <experiments>3</experiments>
</comment>
<comment type="interaction">
    <interactant intactId="EBI-3919291">
        <id>Q9Y342</id>
    </interactant>
    <interactant intactId="EBI-10262539">
        <id>Q8IWR1</id>
        <label>TRIM59</label>
    </interactant>
    <organismsDiffer>false</organismsDiffer>
    <experiments>3</experiments>
</comment>
<comment type="interaction">
    <interactant intactId="EBI-3919291">
        <id>Q9Y342</id>
    </interactant>
    <interactant intactId="EBI-1055364">
        <id>Q3ZAQ7</id>
        <label>VMA21</label>
    </interactant>
    <organismsDiffer>false</organismsDiffer>
    <experiments>3</experiments>
</comment>
<comment type="interaction">
    <interactant intactId="EBI-3919291">
        <id>Q9Y342</id>
    </interactant>
    <interactant intactId="EBI-12837904">
        <id>Q96MV8</id>
        <label>ZDHHC15</label>
    </interactant>
    <organismsDiffer>false</organismsDiffer>
    <experiments>3</experiments>
</comment>
<comment type="subcellular location">
    <subcellularLocation>
        <location evidence="5">Cell membrane</location>
        <topology evidence="3">Multi-pass membrane protein</topology>
    </subcellularLocation>
    <subcellularLocation>
        <location evidence="5">Myelin membrane</location>
        <topology evidence="3">Multi-pass membrane protein</topology>
    </subcellularLocation>
    <subcellularLocation>
        <location evidence="2">Apical cell membrane</location>
        <topology evidence="3">Multi-pass membrane protein</topology>
    </subcellularLocation>
    <subcellularLocation>
        <location evidence="5">Golgi apparatus</location>
    </subcellularLocation>
    <text evidence="1 2 5">In polarized cells, localized predominantly in the apical membrane (By similarity). Located in lipid raft (By similarity). Recycled between the plasma membrane and the Golgi complex (PubMed:26002055). PLLP is continuously recirculating in the cell (PubMed:26002055).</text>
</comment>
<comment type="PTM">
    <text evidence="2">Phosphorylated.</text>
</comment>
<comment type="similarity">
    <text evidence="7">Belongs to the MAL family.</text>
</comment>
<feature type="chain" id="PRO_0000156813" description="Plasmolipin">
    <location>
        <begin position="1"/>
        <end position="182"/>
    </location>
</feature>
<feature type="topological domain" description="Cytoplasmic" evidence="3">
    <location>
        <begin position="1"/>
        <end position="35"/>
    </location>
</feature>
<feature type="transmembrane region" description="Helical" evidence="3">
    <location>
        <begin position="36"/>
        <end position="56"/>
    </location>
</feature>
<feature type="topological domain" description="Extracellular" evidence="3">
    <location>
        <begin position="57"/>
        <end position="68"/>
    </location>
</feature>
<feature type="transmembrane region" description="Helical" evidence="3">
    <location>
        <begin position="69"/>
        <end position="89"/>
    </location>
</feature>
<feature type="topological domain" description="Cytoplasmic" evidence="3">
    <location>
        <begin position="90"/>
        <end position="99"/>
    </location>
</feature>
<feature type="transmembrane region" description="Helical" evidence="3">
    <location>
        <begin position="100"/>
        <end position="120"/>
    </location>
</feature>
<feature type="topological domain" description="Extracellular" evidence="3">
    <location>
        <begin position="121"/>
        <end position="141"/>
    </location>
</feature>
<feature type="transmembrane region" description="Helical" evidence="3">
    <location>
        <begin position="142"/>
        <end position="162"/>
    </location>
</feature>
<feature type="topological domain" description="Cytoplasmic" evidence="3">
    <location>
        <begin position="163"/>
        <end position="182"/>
    </location>
</feature>
<feature type="domain" description="MARVEL" evidence="4">
    <location>
        <begin position="32"/>
        <end position="166"/>
    </location>
</feature>
<feature type="modified residue" description="Phosphoserine" evidence="9">
    <location>
        <position position="9"/>
    </location>
</feature>
<sequence>MAEFPSKVSTRTSSPAQGAEASVSALRPDLGFVRSRLGALMLLQLVLGLLVWALIADTPYHLYPAYGWVMFVAVFLWLVTIVLFNLYLFQLHMKLYMVPWPLVLMIFNISATVLYITAFIACSAAVDLTSLRGTRPYNQRAAASFFACLVMIAYGVSAFFSYQAWRGVGSNAATSQMAGGYA</sequence>